<evidence type="ECO:0000250" key="1"/>
<evidence type="ECO:0000250" key="2">
    <source>
        <dbReference type="UniProtKB" id="O22317"/>
    </source>
</evidence>
<evidence type="ECO:0000255" key="3"/>
<evidence type="ECO:0000256" key="4">
    <source>
        <dbReference type="SAM" id="MobiDB-lite"/>
    </source>
</evidence>
<evidence type="ECO:0000269" key="5">
    <source>
    </source>
</evidence>
<evidence type="ECO:0000305" key="6"/>
<name>BTGC_EMENI</name>
<dbReference type="EC" id="3.2.1.39"/>
<dbReference type="EMBL" id="DQ490493">
    <property type="protein sequence ID" value="ABF50869.1"/>
    <property type="molecule type" value="mRNA"/>
</dbReference>
<dbReference type="EMBL" id="AACD01000080">
    <property type="protein sequence ID" value="EAA60742.1"/>
    <property type="molecule type" value="Genomic_DNA"/>
</dbReference>
<dbReference type="EMBL" id="BN001303">
    <property type="protein sequence ID" value="CBF76969.1"/>
    <property type="molecule type" value="Genomic_DNA"/>
</dbReference>
<dbReference type="RefSeq" id="XP_662304.1">
    <property type="nucleotide sequence ID" value="XM_657212.1"/>
</dbReference>
<dbReference type="SMR" id="Q5B430"/>
<dbReference type="STRING" id="227321.Q5B430"/>
<dbReference type="CAZy" id="GH17">
    <property type="family name" value="Glycoside Hydrolase Family 17"/>
</dbReference>
<dbReference type="GlyCosmos" id="Q5B430">
    <property type="glycosylation" value="4 sites, No reported glycans"/>
</dbReference>
<dbReference type="EnsemblFungi" id="CBF76969">
    <property type="protein sequence ID" value="CBF76969"/>
    <property type="gene ID" value="ANIA_04700"/>
</dbReference>
<dbReference type="KEGG" id="ani:ANIA_04700"/>
<dbReference type="VEuPathDB" id="FungiDB:AN4700"/>
<dbReference type="eggNOG" id="ENOG502QTKT">
    <property type="taxonomic scope" value="Eukaryota"/>
</dbReference>
<dbReference type="HOGENOM" id="CLU_011476_0_1_1"/>
<dbReference type="InParanoid" id="Q5B430"/>
<dbReference type="OMA" id="QYPDCLK"/>
<dbReference type="OrthoDB" id="68336at2759"/>
<dbReference type="Proteomes" id="UP000000560">
    <property type="component" value="Chromosome III"/>
</dbReference>
<dbReference type="GO" id="GO:0009986">
    <property type="term" value="C:cell surface"/>
    <property type="evidence" value="ECO:0000318"/>
    <property type="project" value="GO_Central"/>
</dbReference>
<dbReference type="GO" id="GO:0005576">
    <property type="term" value="C:extracellular region"/>
    <property type="evidence" value="ECO:0000318"/>
    <property type="project" value="GO_Central"/>
</dbReference>
<dbReference type="GO" id="GO:0009277">
    <property type="term" value="C:fungal-type cell wall"/>
    <property type="evidence" value="ECO:0000318"/>
    <property type="project" value="GO_Central"/>
</dbReference>
<dbReference type="GO" id="GO:0005886">
    <property type="term" value="C:plasma membrane"/>
    <property type="evidence" value="ECO:0007669"/>
    <property type="project" value="UniProtKB-SubCell"/>
</dbReference>
<dbReference type="GO" id="GO:0042973">
    <property type="term" value="F:glucan endo-1,3-beta-D-glucosidase activity"/>
    <property type="evidence" value="ECO:0000314"/>
    <property type="project" value="UniProtKB"/>
</dbReference>
<dbReference type="GO" id="GO:0071555">
    <property type="term" value="P:cell wall organization"/>
    <property type="evidence" value="ECO:0000318"/>
    <property type="project" value="GO_Central"/>
</dbReference>
<dbReference type="GO" id="GO:0009251">
    <property type="term" value="P:glucan catabolic process"/>
    <property type="evidence" value="ECO:0000314"/>
    <property type="project" value="UniProtKB"/>
</dbReference>
<dbReference type="FunFam" id="3.20.20.80:FF:000151">
    <property type="entry name" value="Glucan endo-1,3-beta-glucosidase btgC"/>
    <property type="match status" value="1"/>
</dbReference>
<dbReference type="Gene3D" id="3.20.20.80">
    <property type="entry name" value="Glycosidases"/>
    <property type="match status" value="1"/>
</dbReference>
<dbReference type="InterPro" id="IPR050732">
    <property type="entry name" value="Beta-glucan_modifiers"/>
</dbReference>
<dbReference type="InterPro" id="IPR017853">
    <property type="entry name" value="Glycoside_hydrolase_SF"/>
</dbReference>
<dbReference type="PANTHER" id="PTHR16631">
    <property type="entry name" value="GLUCAN 1,3-BETA-GLUCOSIDASE"/>
    <property type="match status" value="1"/>
</dbReference>
<dbReference type="PANTHER" id="PTHR16631:SF17">
    <property type="entry name" value="GLUCAN ENDO-1,3-BETA-GLUCOSIDASE BTGC"/>
    <property type="match status" value="1"/>
</dbReference>
<dbReference type="SUPFAM" id="SSF51445">
    <property type="entry name" value="(Trans)glycosidases"/>
    <property type="match status" value="1"/>
</dbReference>
<feature type="chain" id="PRO_0000395128" description="Glucan endo-1,3-beta-glucosidase btgC">
    <location>
        <begin position="1"/>
        <end position="649"/>
    </location>
</feature>
<feature type="topological domain" description="Cytoplasmic" evidence="3">
    <location>
        <begin position="1"/>
        <end position="274"/>
    </location>
</feature>
<feature type="transmembrane region" description="Helical; Signal-anchor for type II membrane protein" evidence="3">
    <location>
        <begin position="275"/>
        <end position="295"/>
    </location>
</feature>
<feature type="topological domain" description="Extracellular" evidence="3">
    <location>
        <begin position="296"/>
        <end position="649"/>
    </location>
</feature>
<feature type="region of interest" description="Disordered" evidence="4">
    <location>
        <begin position="1"/>
        <end position="50"/>
    </location>
</feature>
<feature type="region of interest" description="Disordered" evidence="4">
    <location>
        <begin position="110"/>
        <end position="224"/>
    </location>
</feature>
<feature type="region of interest" description="Disordered" evidence="4">
    <location>
        <begin position="301"/>
        <end position="329"/>
    </location>
</feature>
<feature type="compositionally biased region" description="Low complexity" evidence="4">
    <location>
        <begin position="144"/>
        <end position="157"/>
    </location>
</feature>
<feature type="compositionally biased region" description="Acidic residues" evidence="4">
    <location>
        <begin position="198"/>
        <end position="208"/>
    </location>
</feature>
<feature type="compositionally biased region" description="Acidic residues" evidence="4">
    <location>
        <begin position="314"/>
        <end position="323"/>
    </location>
</feature>
<feature type="active site" description="Proton donor" evidence="2">
    <location>
        <position position="452"/>
    </location>
</feature>
<feature type="active site" description="Nucleophile" evidence="2">
    <location>
        <position position="551"/>
    </location>
</feature>
<feature type="glycosylation site" description="N-linked (GlcNAc...) asparagine" evidence="3">
    <location>
        <position position="369"/>
    </location>
</feature>
<feature type="glycosylation site" description="N-linked (GlcNAc...) asparagine" evidence="3">
    <location>
        <position position="392"/>
    </location>
</feature>
<feature type="glycosylation site" description="N-linked (GlcNAc...) asparagine" evidence="3">
    <location>
        <position position="420"/>
    </location>
</feature>
<feature type="glycosylation site" description="N-linked (GlcNAc...) asparagine" evidence="3">
    <location>
        <position position="596"/>
    </location>
</feature>
<gene>
    <name type="primary">btgC</name>
    <name type="ORF">AN4700</name>
</gene>
<reference key="1">
    <citation type="journal article" date="2006" name="Proc. Natl. Acad. Sci. U.S.A.">
        <title>Development and application of a suite of polysaccharide-degrading enzymes for analyzing plant cell walls.</title>
        <authorList>
            <person name="Bauer S."/>
            <person name="Vasu P."/>
            <person name="Persson S."/>
            <person name="Mort A.J."/>
            <person name="Somerville C.R."/>
        </authorList>
    </citation>
    <scope>NUCLEOTIDE SEQUENCE [MRNA]</scope>
    <scope>FUNCTION</scope>
    <source>
        <strain>FGSC A4 / ATCC 38163 / CBS 112.46 / NRRL 194 / M139</strain>
    </source>
</reference>
<reference key="2">
    <citation type="journal article" date="2005" name="Nature">
        <title>Sequencing of Aspergillus nidulans and comparative analysis with A. fumigatus and A. oryzae.</title>
        <authorList>
            <person name="Galagan J.E."/>
            <person name="Calvo S.E."/>
            <person name="Cuomo C."/>
            <person name="Ma L.-J."/>
            <person name="Wortman J.R."/>
            <person name="Batzoglou S."/>
            <person name="Lee S.-I."/>
            <person name="Bastuerkmen M."/>
            <person name="Spevak C.C."/>
            <person name="Clutterbuck J."/>
            <person name="Kapitonov V."/>
            <person name="Jurka J."/>
            <person name="Scazzocchio C."/>
            <person name="Farman M.L."/>
            <person name="Butler J."/>
            <person name="Purcell S."/>
            <person name="Harris S."/>
            <person name="Braus G.H."/>
            <person name="Draht O."/>
            <person name="Busch S."/>
            <person name="D'Enfert C."/>
            <person name="Bouchier C."/>
            <person name="Goldman G.H."/>
            <person name="Bell-Pedersen D."/>
            <person name="Griffiths-Jones S."/>
            <person name="Doonan J.H."/>
            <person name="Yu J."/>
            <person name="Vienken K."/>
            <person name="Pain A."/>
            <person name="Freitag M."/>
            <person name="Selker E.U."/>
            <person name="Archer D.B."/>
            <person name="Penalva M.A."/>
            <person name="Oakley B.R."/>
            <person name="Momany M."/>
            <person name="Tanaka T."/>
            <person name="Kumagai T."/>
            <person name="Asai K."/>
            <person name="Machida M."/>
            <person name="Nierman W.C."/>
            <person name="Denning D.W."/>
            <person name="Caddick M.X."/>
            <person name="Hynes M."/>
            <person name="Paoletti M."/>
            <person name="Fischer R."/>
            <person name="Miller B.L."/>
            <person name="Dyer P.S."/>
            <person name="Sachs M.S."/>
            <person name="Osmani S.A."/>
            <person name="Birren B.W."/>
        </authorList>
    </citation>
    <scope>NUCLEOTIDE SEQUENCE [LARGE SCALE GENOMIC DNA]</scope>
    <source>
        <strain>FGSC A4 / ATCC 38163 / CBS 112.46 / NRRL 194 / M139</strain>
    </source>
</reference>
<reference key="3">
    <citation type="journal article" date="2009" name="Fungal Genet. Biol.">
        <title>The 2008 update of the Aspergillus nidulans genome annotation: a community effort.</title>
        <authorList>
            <person name="Wortman J.R."/>
            <person name="Gilsenan J.M."/>
            <person name="Joardar V."/>
            <person name="Deegan J."/>
            <person name="Clutterbuck J."/>
            <person name="Andersen M.R."/>
            <person name="Archer D."/>
            <person name="Bencina M."/>
            <person name="Braus G."/>
            <person name="Coutinho P."/>
            <person name="von Dohren H."/>
            <person name="Doonan J."/>
            <person name="Driessen A.J."/>
            <person name="Durek P."/>
            <person name="Espeso E."/>
            <person name="Fekete E."/>
            <person name="Flipphi M."/>
            <person name="Estrada C.G."/>
            <person name="Geysens S."/>
            <person name="Goldman G."/>
            <person name="de Groot P.W."/>
            <person name="Hansen K."/>
            <person name="Harris S.D."/>
            <person name="Heinekamp T."/>
            <person name="Helmstaedt K."/>
            <person name="Henrissat B."/>
            <person name="Hofmann G."/>
            <person name="Homan T."/>
            <person name="Horio T."/>
            <person name="Horiuchi H."/>
            <person name="James S."/>
            <person name="Jones M."/>
            <person name="Karaffa L."/>
            <person name="Karanyi Z."/>
            <person name="Kato M."/>
            <person name="Keller N."/>
            <person name="Kelly D.E."/>
            <person name="Kiel J.A."/>
            <person name="Kim J.M."/>
            <person name="van der Klei I.J."/>
            <person name="Klis F.M."/>
            <person name="Kovalchuk A."/>
            <person name="Krasevec N."/>
            <person name="Kubicek C.P."/>
            <person name="Liu B."/>
            <person name="Maccabe A."/>
            <person name="Meyer V."/>
            <person name="Mirabito P."/>
            <person name="Miskei M."/>
            <person name="Mos M."/>
            <person name="Mullins J."/>
            <person name="Nelson D.R."/>
            <person name="Nielsen J."/>
            <person name="Oakley B.R."/>
            <person name="Osmani S.A."/>
            <person name="Pakula T."/>
            <person name="Paszewski A."/>
            <person name="Paulsen I."/>
            <person name="Pilsyk S."/>
            <person name="Pocsi I."/>
            <person name="Punt P.J."/>
            <person name="Ram A.F."/>
            <person name="Ren Q."/>
            <person name="Robellet X."/>
            <person name="Robson G."/>
            <person name="Seiboth B."/>
            <person name="van Solingen P."/>
            <person name="Specht T."/>
            <person name="Sun J."/>
            <person name="Taheri-Talesh N."/>
            <person name="Takeshita N."/>
            <person name="Ussery D."/>
            <person name="vanKuyk P.A."/>
            <person name="Visser H."/>
            <person name="van de Vondervoort P.J."/>
            <person name="de Vries R.P."/>
            <person name="Walton J."/>
            <person name="Xiang X."/>
            <person name="Xiong Y."/>
            <person name="Zeng A.P."/>
            <person name="Brandt B.W."/>
            <person name="Cornell M.J."/>
            <person name="van den Hondel C.A."/>
            <person name="Visser J."/>
            <person name="Oliver S.G."/>
            <person name="Turner G."/>
        </authorList>
    </citation>
    <scope>GENOME REANNOTATION</scope>
    <source>
        <strain>FGSC A4 / ATCC 38163 / CBS 112.46 / NRRL 194 / M139</strain>
    </source>
</reference>
<sequence>MGDRSEQYGDIPPISSQHRMHGYGNNGEPAAMPGDGQQNWGSGPGIAHTHSMRTASTATPGMDNLGPSAVGGGISGIALGVANTHDRQSGIDAFRDADATLGYIPAERGYHTTGADNPYVPSPPSVGPGPDESSEGLRSHETFGSSAALSAAGAPAGNWTPPSGSRHSFLDGSYQGVASGPYQRHSAYSSQDYPADINPDDILDDGDDGFAAAPSNKPNAAGGAATGGAAGGLLGEFFGAKKAADASYDPVPGAGLPSVEKYAKPRPSGASRKRGWIIGGILAFIVIGAIVGGAVGGTLGNRRSETASESSEVSADDDTETNGDLDKNSDEIKSLMAMEGLHKVFPGMDYTPWGVQHPECDKWPPSQNNVTRDMAVLSRLTNTVRLYGTDCNQTEMVLHAIDRLELTDMKLWLGVWIDTNTTTNERQLSQLYDILDKRSDHSVFKGAIIGNEALYRAGSTKEEARKNIIDYMRQVRKHFNDHNIDIKVATSDLGDNWDETLADATDVVMSNVHPFFGGVEVSKAAGWTWSFWNSHNAPLTQGTNKGNIIAEVGWPSGGGNDCGDGANCKDDTSGAVAGVKQMNQFMADWVCPALENGTDYFWFEAFDEPWKVKFNKGDEQWEDKWGLMDPGRNLKPGIEIPDCGGKTAA</sequence>
<organism>
    <name type="scientific">Emericella nidulans (strain FGSC A4 / ATCC 38163 / CBS 112.46 / NRRL 194 / M139)</name>
    <name type="common">Aspergillus nidulans</name>
    <dbReference type="NCBI Taxonomy" id="227321"/>
    <lineage>
        <taxon>Eukaryota</taxon>
        <taxon>Fungi</taxon>
        <taxon>Dikarya</taxon>
        <taxon>Ascomycota</taxon>
        <taxon>Pezizomycotina</taxon>
        <taxon>Eurotiomycetes</taxon>
        <taxon>Eurotiomycetidae</taxon>
        <taxon>Eurotiales</taxon>
        <taxon>Aspergillaceae</taxon>
        <taxon>Aspergillus</taxon>
        <taxon>Aspergillus subgen. Nidulantes</taxon>
    </lineage>
</organism>
<protein>
    <recommendedName>
        <fullName>Glucan endo-1,3-beta-glucosidase btgC</fullName>
        <ecNumber>3.2.1.39</ecNumber>
    </recommendedName>
    <alternativeName>
        <fullName>Endo-1,3-beta-glucanase btgC</fullName>
    </alternativeName>
    <alternativeName>
        <fullName>Laminarinase btgC</fullName>
    </alternativeName>
</protein>
<accession>Q5B430</accession>
<accession>C8VAX6</accession>
<accession>Q1HFT1</accession>
<keyword id="KW-0119">Carbohydrate metabolism</keyword>
<keyword id="KW-1003">Cell membrane</keyword>
<keyword id="KW-0961">Cell wall biogenesis/degradation</keyword>
<keyword id="KW-0325">Glycoprotein</keyword>
<keyword id="KW-0378">Hydrolase</keyword>
<keyword id="KW-0472">Membrane</keyword>
<keyword id="KW-0624">Polysaccharide degradation</keyword>
<keyword id="KW-1185">Reference proteome</keyword>
<keyword id="KW-0735">Signal-anchor</keyword>
<keyword id="KW-0812">Transmembrane</keyword>
<keyword id="KW-1133">Transmembrane helix</keyword>
<comment type="function">
    <text evidence="5">Glucanases play a role in cell expansion during growth, in cell-cell fusion during mating, and in spore release during sporulation. This enzyme may be involved in beta-glucan degradation. Active on laminarin and lichenan.</text>
</comment>
<comment type="catalytic activity">
    <reaction>
        <text>Hydrolysis of (1-&gt;3)-beta-D-glucosidic linkages in (1-&gt;3)-beta-D-glucans.</text>
        <dbReference type="EC" id="3.2.1.39"/>
    </reaction>
</comment>
<comment type="subcellular location">
    <subcellularLocation>
        <location evidence="1">Cell membrane</location>
        <topology evidence="1">Single-pass type II membrane protein</topology>
    </subcellularLocation>
</comment>
<comment type="similarity">
    <text evidence="6">Belongs to the glycosyl hydrolase 17 family.</text>
</comment>
<proteinExistence type="evidence at transcript level"/>